<reference key="1">
    <citation type="submission" date="2007-10" db="EMBL/GenBank/DDBJ databases">
        <title>Genome sequence of Campylobacter concisus 13826 isolated from human feces.</title>
        <authorList>
            <person name="Fouts D.E."/>
            <person name="Mongodin E.F."/>
            <person name="Puiu D."/>
            <person name="Sebastian Y."/>
            <person name="Miller W.G."/>
            <person name="Mandrell R.E."/>
            <person name="On S."/>
            <person name="Nelson K.E."/>
        </authorList>
    </citation>
    <scope>NUCLEOTIDE SEQUENCE [LARGE SCALE GENOMIC DNA]</scope>
    <source>
        <strain>13826</strain>
    </source>
</reference>
<organism>
    <name type="scientific">Campylobacter concisus (strain 13826)</name>
    <dbReference type="NCBI Taxonomy" id="360104"/>
    <lineage>
        <taxon>Bacteria</taxon>
        <taxon>Pseudomonadati</taxon>
        <taxon>Campylobacterota</taxon>
        <taxon>Epsilonproteobacteria</taxon>
        <taxon>Campylobacterales</taxon>
        <taxon>Campylobacteraceae</taxon>
        <taxon>Campylobacter</taxon>
    </lineage>
</organism>
<feature type="chain" id="PRO_1000073430" description="Large ribosomal subunit protein bL17">
    <location>
        <begin position="1"/>
        <end position="118"/>
    </location>
</feature>
<comment type="subunit">
    <text evidence="1">Part of the 50S ribosomal subunit. Contacts protein L32.</text>
</comment>
<comment type="similarity">
    <text evidence="1">Belongs to the bacterial ribosomal protein bL17 family.</text>
</comment>
<dbReference type="EMBL" id="CP000792">
    <property type="protein sequence ID" value="EAT98151.3"/>
    <property type="molecule type" value="Genomic_DNA"/>
</dbReference>
<dbReference type="RefSeq" id="WP_002941584.1">
    <property type="nucleotide sequence ID" value="NC_009802.2"/>
</dbReference>
<dbReference type="SMR" id="A7ZFY6"/>
<dbReference type="STRING" id="360104.CCC13826_1750"/>
<dbReference type="GeneID" id="28663409"/>
<dbReference type="KEGG" id="cco:CCC13826_1750"/>
<dbReference type="eggNOG" id="COG0203">
    <property type="taxonomic scope" value="Bacteria"/>
</dbReference>
<dbReference type="HOGENOM" id="CLU_074407_2_0_7"/>
<dbReference type="OrthoDB" id="9809073at2"/>
<dbReference type="Proteomes" id="UP000001121">
    <property type="component" value="Chromosome"/>
</dbReference>
<dbReference type="GO" id="GO:0022625">
    <property type="term" value="C:cytosolic large ribosomal subunit"/>
    <property type="evidence" value="ECO:0007669"/>
    <property type="project" value="TreeGrafter"/>
</dbReference>
<dbReference type="GO" id="GO:0003735">
    <property type="term" value="F:structural constituent of ribosome"/>
    <property type="evidence" value="ECO:0007669"/>
    <property type="project" value="InterPro"/>
</dbReference>
<dbReference type="GO" id="GO:0006412">
    <property type="term" value="P:translation"/>
    <property type="evidence" value="ECO:0007669"/>
    <property type="project" value="UniProtKB-UniRule"/>
</dbReference>
<dbReference type="FunFam" id="3.90.1030.10:FF:000003">
    <property type="entry name" value="50S ribosomal protein L17"/>
    <property type="match status" value="1"/>
</dbReference>
<dbReference type="Gene3D" id="3.90.1030.10">
    <property type="entry name" value="Ribosomal protein L17"/>
    <property type="match status" value="1"/>
</dbReference>
<dbReference type="HAMAP" id="MF_01368">
    <property type="entry name" value="Ribosomal_bL17"/>
    <property type="match status" value="1"/>
</dbReference>
<dbReference type="InterPro" id="IPR000456">
    <property type="entry name" value="Ribosomal_bL17"/>
</dbReference>
<dbReference type="InterPro" id="IPR047859">
    <property type="entry name" value="Ribosomal_bL17_CS"/>
</dbReference>
<dbReference type="InterPro" id="IPR036373">
    <property type="entry name" value="Ribosomal_bL17_sf"/>
</dbReference>
<dbReference type="NCBIfam" id="TIGR00059">
    <property type="entry name" value="L17"/>
    <property type="match status" value="1"/>
</dbReference>
<dbReference type="PANTHER" id="PTHR14413:SF16">
    <property type="entry name" value="LARGE RIBOSOMAL SUBUNIT PROTEIN BL17M"/>
    <property type="match status" value="1"/>
</dbReference>
<dbReference type="PANTHER" id="PTHR14413">
    <property type="entry name" value="RIBOSOMAL PROTEIN L17"/>
    <property type="match status" value="1"/>
</dbReference>
<dbReference type="Pfam" id="PF01196">
    <property type="entry name" value="Ribosomal_L17"/>
    <property type="match status" value="1"/>
</dbReference>
<dbReference type="SUPFAM" id="SSF64263">
    <property type="entry name" value="Prokaryotic ribosomal protein L17"/>
    <property type="match status" value="1"/>
</dbReference>
<dbReference type="PROSITE" id="PS01167">
    <property type="entry name" value="RIBOSOMAL_L17"/>
    <property type="match status" value="1"/>
</dbReference>
<evidence type="ECO:0000255" key="1">
    <source>
        <dbReference type="HAMAP-Rule" id="MF_01368"/>
    </source>
</evidence>
<evidence type="ECO:0000305" key="2"/>
<sequence length="118" mass="13434">MRHKHGYRKLGRTSSHRSALLKNLAIAIIKSEKIETTLPKAKELRSYVEKLITRARKGDSNAHRAVFASLQDKETTNKLVTEVAPKFKERNGGYTRIIKTRVRRGDAAEMAYIELVAE</sequence>
<proteinExistence type="inferred from homology"/>
<keyword id="KW-0687">Ribonucleoprotein</keyword>
<keyword id="KW-0689">Ribosomal protein</keyword>
<protein>
    <recommendedName>
        <fullName evidence="1">Large ribosomal subunit protein bL17</fullName>
    </recommendedName>
    <alternativeName>
        <fullName evidence="2">50S ribosomal protein L17</fullName>
    </alternativeName>
</protein>
<accession>A7ZFY6</accession>
<name>RL17_CAMC1</name>
<gene>
    <name evidence="1" type="primary">rplQ</name>
    <name type="ordered locus">Ccon26_18590</name>
    <name type="ORF">CCC13826_1750</name>
</gene>